<name>ISPH_ECO8A</name>
<dbReference type="EC" id="1.17.7.4" evidence="1"/>
<dbReference type="EMBL" id="CU928160">
    <property type="protein sequence ID" value="CAQ96920.1"/>
    <property type="molecule type" value="Genomic_DNA"/>
</dbReference>
<dbReference type="RefSeq" id="WP_001166405.1">
    <property type="nucleotide sequence ID" value="NC_011741.1"/>
</dbReference>
<dbReference type="SMR" id="B7M0C5"/>
<dbReference type="KEGG" id="ecr:ECIAI1_0030"/>
<dbReference type="HOGENOM" id="CLU_027486_1_0_6"/>
<dbReference type="UniPathway" id="UPA00056">
    <property type="reaction ID" value="UER00097"/>
</dbReference>
<dbReference type="UniPathway" id="UPA00059">
    <property type="reaction ID" value="UER00105"/>
</dbReference>
<dbReference type="GO" id="GO:0051539">
    <property type="term" value="F:4 iron, 4 sulfur cluster binding"/>
    <property type="evidence" value="ECO:0007669"/>
    <property type="project" value="UniProtKB-UniRule"/>
</dbReference>
<dbReference type="GO" id="GO:0051745">
    <property type="term" value="F:4-hydroxy-3-methylbut-2-enyl diphosphate reductase activity"/>
    <property type="evidence" value="ECO:0007669"/>
    <property type="project" value="UniProtKB-UniRule"/>
</dbReference>
<dbReference type="GO" id="GO:0046872">
    <property type="term" value="F:metal ion binding"/>
    <property type="evidence" value="ECO:0007669"/>
    <property type="project" value="UniProtKB-KW"/>
</dbReference>
<dbReference type="GO" id="GO:0050992">
    <property type="term" value="P:dimethylallyl diphosphate biosynthetic process"/>
    <property type="evidence" value="ECO:0007669"/>
    <property type="project" value="UniProtKB-UniRule"/>
</dbReference>
<dbReference type="GO" id="GO:0019288">
    <property type="term" value="P:isopentenyl diphosphate biosynthetic process, methylerythritol 4-phosphate pathway"/>
    <property type="evidence" value="ECO:0007669"/>
    <property type="project" value="UniProtKB-UniRule"/>
</dbReference>
<dbReference type="GO" id="GO:0016114">
    <property type="term" value="P:terpenoid biosynthetic process"/>
    <property type="evidence" value="ECO:0007669"/>
    <property type="project" value="UniProtKB-UniRule"/>
</dbReference>
<dbReference type="CDD" id="cd13944">
    <property type="entry name" value="lytB_ispH"/>
    <property type="match status" value="1"/>
</dbReference>
<dbReference type="FunFam" id="3.40.1010.20:FF:000001">
    <property type="entry name" value="4-hydroxy-3-methylbut-2-enyl diphosphate reductase"/>
    <property type="match status" value="1"/>
</dbReference>
<dbReference type="FunFam" id="3.40.50.11270:FF:000001">
    <property type="entry name" value="4-hydroxy-3-methylbut-2-enyl diphosphate reductase"/>
    <property type="match status" value="1"/>
</dbReference>
<dbReference type="Gene3D" id="3.40.50.11270">
    <property type="match status" value="1"/>
</dbReference>
<dbReference type="Gene3D" id="3.40.1010.20">
    <property type="entry name" value="4-hydroxy-3-methylbut-2-enyl diphosphate reductase, catalytic domain"/>
    <property type="match status" value="2"/>
</dbReference>
<dbReference type="HAMAP" id="MF_00191">
    <property type="entry name" value="IspH"/>
    <property type="match status" value="1"/>
</dbReference>
<dbReference type="InterPro" id="IPR003451">
    <property type="entry name" value="LytB/IspH"/>
</dbReference>
<dbReference type="NCBIfam" id="TIGR00216">
    <property type="entry name" value="ispH_lytB"/>
    <property type="match status" value="1"/>
</dbReference>
<dbReference type="NCBIfam" id="NF002188">
    <property type="entry name" value="PRK01045.1-2"/>
    <property type="match status" value="1"/>
</dbReference>
<dbReference type="NCBIfam" id="NF002190">
    <property type="entry name" value="PRK01045.1-4"/>
    <property type="match status" value="1"/>
</dbReference>
<dbReference type="PANTHER" id="PTHR30426">
    <property type="entry name" value="4-HYDROXY-3-METHYLBUT-2-ENYL DIPHOSPHATE REDUCTASE"/>
    <property type="match status" value="1"/>
</dbReference>
<dbReference type="PANTHER" id="PTHR30426:SF0">
    <property type="entry name" value="4-HYDROXY-3-METHYLBUT-2-ENYL DIPHOSPHATE REDUCTASE"/>
    <property type="match status" value="1"/>
</dbReference>
<dbReference type="Pfam" id="PF02401">
    <property type="entry name" value="LYTB"/>
    <property type="match status" value="1"/>
</dbReference>
<keyword id="KW-0004">4Fe-4S</keyword>
<keyword id="KW-0408">Iron</keyword>
<keyword id="KW-0411">Iron-sulfur</keyword>
<keyword id="KW-0414">Isoprene biosynthesis</keyword>
<keyword id="KW-0479">Metal-binding</keyword>
<keyword id="KW-0560">Oxidoreductase</keyword>
<proteinExistence type="inferred from homology"/>
<feature type="chain" id="PRO_1000118608" description="4-hydroxy-3-methylbut-2-enyl diphosphate reductase">
    <location>
        <begin position="1"/>
        <end position="316"/>
    </location>
</feature>
<feature type="active site" description="Proton donor" evidence="1">
    <location>
        <position position="126"/>
    </location>
</feature>
<feature type="binding site" evidence="1">
    <location>
        <position position="12"/>
    </location>
    <ligand>
        <name>[4Fe-4S] cluster</name>
        <dbReference type="ChEBI" id="CHEBI:49883"/>
    </ligand>
</feature>
<feature type="binding site" evidence="1">
    <location>
        <position position="41"/>
    </location>
    <ligand>
        <name>(2E)-4-hydroxy-3-methylbut-2-enyl diphosphate</name>
        <dbReference type="ChEBI" id="CHEBI:128753"/>
    </ligand>
</feature>
<feature type="binding site" evidence="1">
    <location>
        <position position="41"/>
    </location>
    <ligand>
        <name>dimethylallyl diphosphate</name>
        <dbReference type="ChEBI" id="CHEBI:57623"/>
    </ligand>
</feature>
<feature type="binding site" evidence="1">
    <location>
        <position position="41"/>
    </location>
    <ligand>
        <name>isopentenyl diphosphate</name>
        <dbReference type="ChEBI" id="CHEBI:128769"/>
    </ligand>
</feature>
<feature type="binding site" evidence="1">
    <location>
        <position position="74"/>
    </location>
    <ligand>
        <name>(2E)-4-hydroxy-3-methylbut-2-enyl diphosphate</name>
        <dbReference type="ChEBI" id="CHEBI:128753"/>
    </ligand>
</feature>
<feature type="binding site" evidence="1">
    <location>
        <position position="74"/>
    </location>
    <ligand>
        <name>dimethylallyl diphosphate</name>
        <dbReference type="ChEBI" id="CHEBI:57623"/>
    </ligand>
</feature>
<feature type="binding site" evidence="1">
    <location>
        <position position="74"/>
    </location>
    <ligand>
        <name>isopentenyl diphosphate</name>
        <dbReference type="ChEBI" id="CHEBI:128769"/>
    </ligand>
</feature>
<feature type="binding site" evidence="1">
    <location>
        <position position="96"/>
    </location>
    <ligand>
        <name>[4Fe-4S] cluster</name>
        <dbReference type="ChEBI" id="CHEBI:49883"/>
    </ligand>
</feature>
<feature type="binding site" evidence="1">
    <location>
        <position position="124"/>
    </location>
    <ligand>
        <name>(2E)-4-hydroxy-3-methylbut-2-enyl diphosphate</name>
        <dbReference type="ChEBI" id="CHEBI:128753"/>
    </ligand>
</feature>
<feature type="binding site" evidence="1">
    <location>
        <position position="124"/>
    </location>
    <ligand>
        <name>dimethylallyl diphosphate</name>
        <dbReference type="ChEBI" id="CHEBI:57623"/>
    </ligand>
</feature>
<feature type="binding site" evidence="1">
    <location>
        <position position="124"/>
    </location>
    <ligand>
        <name>isopentenyl diphosphate</name>
        <dbReference type="ChEBI" id="CHEBI:128769"/>
    </ligand>
</feature>
<feature type="binding site" evidence="1">
    <location>
        <position position="167"/>
    </location>
    <ligand>
        <name>(2E)-4-hydroxy-3-methylbut-2-enyl diphosphate</name>
        <dbReference type="ChEBI" id="CHEBI:128753"/>
    </ligand>
</feature>
<feature type="binding site" evidence="1">
    <location>
        <position position="197"/>
    </location>
    <ligand>
        <name>[4Fe-4S] cluster</name>
        <dbReference type="ChEBI" id="CHEBI:49883"/>
    </ligand>
</feature>
<feature type="binding site" evidence="1">
    <location>
        <position position="225"/>
    </location>
    <ligand>
        <name>(2E)-4-hydroxy-3-methylbut-2-enyl diphosphate</name>
        <dbReference type="ChEBI" id="CHEBI:128753"/>
    </ligand>
</feature>
<feature type="binding site" evidence="1">
    <location>
        <position position="225"/>
    </location>
    <ligand>
        <name>dimethylallyl diphosphate</name>
        <dbReference type="ChEBI" id="CHEBI:57623"/>
    </ligand>
</feature>
<feature type="binding site" evidence="1">
    <location>
        <position position="225"/>
    </location>
    <ligand>
        <name>isopentenyl diphosphate</name>
        <dbReference type="ChEBI" id="CHEBI:128769"/>
    </ligand>
</feature>
<feature type="binding site" evidence="1">
    <location>
        <position position="226"/>
    </location>
    <ligand>
        <name>(2E)-4-hydroxy-3-methylbut-2-enyl diphosphate</name>
        <dbReference type="ChEBI" id="CHEBI:128753"/>
    </ligand>
</feature>
<feature type="binding site" evidence="1">
    <location>
        <position position="226"/>
    </location>
    <ligand>
        <name>dimethylallyl diphosphate</name>
        <dbReference type="ChEBI" id="CHEBI:57623"/>
    </ligand>
</feature>
<feature type="binding site" evidence="1">
    <location>
        <position position="226"/>
    </location>
    <ligand>
        <name>isopentenyl diphosphate</name>
        <dbReference type="ChEBI" id="CHEBI:128769"/>
    </ligand>
</feature>
<feature type="binding site" evidence="1">
    <location>
        <position position="227"/>
    </location>
    <ligand>
        <name>(2E)-4-hydroxy-3-methylbut-2-enyl diphosphate</name>
        <dbReference type="ChEBI" id="CHEBI:128753"/>
    </ligand>
</feature>
<feature type="binding site" evidence="1">
    <location>
        <position position="227"/>
    </location>
    <ligand>
        <name>dimethylallyl diphosphate</name>
        <dbReference type="ChEBI" id="CHEBI:57623"/>
    </ligand>
</feature>
<feature type="binding site" evidence="1">
    <location>
        <position position="227"/>
    </location>
    <ligand>
        <name>isopentenyl diphosphate</name>
        <dbReference type="ChEBI" id="CHEBI:128769"/>
    </ligand>
</feature>
<feature type="binding site" evidence="1">
    <location>
        <position position="269"/>
    </location>
    <ligand>
        <name>(2E)-4-hydroxy-3-methylbut-2-enyl diphosphate</name>
        <dbReference type="ChEBI" id="CHEBI:128753"/>
    </ligand>
</feature>
<feature type="binding site" evidence="1">
    <location>
        <position position="269"/>
    </location>
    <ligand>
        <name>dimethylallyl diphosphate</name>
        <dbReference type="ChEBI" id="CHEBI:57623"/>
    </ligand>
</feature>
<feature type="binding site" evidence="1">
    <location>
        <position position="269"/>
    </location>
    <ligand>
        <name>isopentenyl diphosphate</name>
        <dbReference type="ChEBI" id="CHEBI:128769"/>
    </ligand>
</feature>
<reference key="1">
    <citation type="journal article" date="2009" name="PLoS Genet.">
        <title>Organised genome dynamics in the Escherichia coli species results in highly diverse adaptive paths.</title>
        <authorList>
            <person name="Touchon M."/>
            <person name="Hoede C."/>
            <person name="Tenaillon O."/>
            <person name="Barbe V."/>
            <person name="Baeriswyl S."/>
            <person name="Bidet P."/>
            <person name="Bingen E."/>
            <person name="Bonacorsi S."/>
            <person name="Bouchier C."/>
            <person name="Bouvet O."/>
            <person name="Calteau A."/>
            <person name="Chiapello H."/>
            <person name="Clermont O."/>
            <person name="Cruveiller S."/>
            <person name="Danchin A."/>
            <person name="Diard M."/>
            <person name="Dossat C."/>
            <person name="Karoui M.E."/>
            <person name="Frapy E."/>
            <person name="Garry L."/>
            <person name="Ghigo J.M."/>
            <person name="Gilles A.M."/>
            <person name="Johnson J."/>
            <person name="Le Bouguenec C."/>
            <person name="Lescat M."/>
            <person name="Mangenot S."/>
            <person name="Martinez-Jehanne V."/>
            <person name="Matic I."/>
            <person name="Nassif X."/>
            <person name="Oztas S."/>
            <person name="Petit M.A."/>
            <person name="Pichon C."/>
            <person name="Rouy Z."/>
            <person name="Ruf C.S."/>
            <person name="Schneider D."/>
            <person name="Tourret J."/>
            <person name="Vacherie B."/>
            <person name="Vallenet D."/>
            <person name="Medigue C."/>
            <person name="Rocha E.P.C."/>
            <person name="Denamur E."/>
        </authorList>
    </citation>
    <scope>NUCLEOTIDE SEQUENCE [LARGE SCALE GENOMIC DNA]</scope>
    <source>
        <strain>IAI1</strain>
    </source>
</reference>
<protein>
    <recommendedName>
        <fullName evidence="1">4-hydroxy-3-methylbut-2-enyl diphosphate reductase</fullName>
        <shortName evidence="1">HMBPP reductase</shortName>
        <ecNumber evidence="1">1.17.7.4</ecNumber>
    </recommendedName>
</protein>
<accession>B7M0C5</accession>
<organism>
    <name type="scientific">Escherichia coli O8 (strain IAI1)</name>
    <dbReference type="NCBI Taxonomy" id="585034"/>
    <lineage>
        <taxon>Bacteria</taxon>
        <taxon>Pseudomonadati</taxon>
        <taxon>Pseudomonadota</taxon>
        <taxon>Gammaproteobacteria</taxon>
        <taxon>Enterobacterales</taxon>
        <taxon>Enterobacteriaceae</taxon>
        <taxon>Escherichia</taxon>
    </lineage>
</organism>
<sequence>MQILLANPRGFCAGVDRAISIVENALAIYGAPIYVRHEVVHNRYVVDSLRERGAIFIEQISEVPDGAILIFSAHGVSQAVRNEAKSRDLTVFDATCPLVTKVHMEVARASRRGEESILIGHAGHPEVEGTMGQYSNPEGGMYLVESPDDVWKLTVKNEEKLSFMTQTTLSVDDTSDVIDALRKRFPKIVGPRKDDICYATTNRQEAVRALAEQAEVVLVVGSKNSSNSNRLAELAQRMGKSAFLIDDAKDIQEEWVKEVKCVGVTAGASAPDILVQNVVARLQQLGGGEAIPLEGREENIVFEVPKELRVDIREVD</sequence>
<comment type="function">
    <text evidence="1">Catalyzes the conversion of 1-hydroxy-2-methyl-2-(E)-butenyl 4-diphosphate (HMBPP) into a mixture of isopentenyl diphosphate (IPP) and dimethylallyl diphosphate (DMAPP). Acts in the terminal step of the DOXP/MEP pathway for isoprenoid precursor biosynthesis.</text>
</comment>
<comment type="catalytic activity">
    <reaction evidence="1">
        <text>isopentenyl diphosphate + 2 oxidized [2Fe-2S]-[ferredoxin] + H2O = (2E)-4-hydroxy-3-methylbut-2-enyl diphosphate + 2 reduced [2Fe-2S]-[ferredoxin] + 2 H(+)</text>
        <dbReference type="Rhea" id="RHEA:24488"/>
        <dbReference type="Rhea" id="RHEA-COMP:10000"/>
        <dbReference type="Rhea" id="RHEA-COMP:10001"/>
        <dbReference type="ChEBI" id="CHEBI:15377"/>
        <dbReference type="ChEBI" id="CHEBI:15378"/>
        <dbReference type="ChEBI" id="CHEBI:33737"/>
        <dbReference type="ChEBI" id="CHEBI:33738"/>
        <dbReference type="ChEBI" id="CHEBI:128753"/>
        <dbReference type="ChEBI" id="CHEBI:128769"/>
        <dbReference type="EC" id="1.17.7.4"/>
    </reaction>
</comment>
<comment type="catalytic activity">
    <reaction evidence="1">
        <text>dimethylallyl diphosphate + 2 oxidized [2Fe-2S]-[ferredoxin] + H2O = (2E)-4-hydroxy-3-methylbut-2-enyl diphosphate + 2 reduced [2Fe-2S]-[ferredoxin] + 2 H(+)</text>
        <dbReference type="Rhea" id="RHEA:24825"/>
        <dbReference type="Rhea" id="RHEA-COMP:10000"/>
        <dbReference type="Rhea" id="RHEA-COMP:10001"/>
        <dbReference type="ChEBI" id="CHEBI:15377"/>
        <dbReference type="ChEBI" id="CHEBI:15378"/>
        <dbReference type="ChEBI" id="CHEBI:33737"/>
        <dbReference type="ChEBI" id="CHEBI:33738"/>
        <dbReference type="ChEBI" id="CHEBI:57623"/>
        <dbReference type="ChEBI" id="CHEBI:128753"/>
        <dbReference type="EC" id="1.17.7.4"/>
    </reaction>
</comment>
<comment type="cofactor">
    <cofactor evidence="1">
        <name>[4Fe-4S] cluster</name>
        <dbReference type="ChEBI" id="CHEBI:49883"/>
    </cofactor>
    <text evidence="1">Binds 1 [4Fe-4S] cluster per subunit.</text>
</comment>
<comment type="pathway">
    <text evidence="1">Isoprenoid biosynthesis; dimethylallyl diphosphate biosynthesis; dimethylallyl diphosphate from (2E)-4-hydroxy-3-methylbutenyl diphosphate: step 1/1.</text>
</comment>
<comment type="pathway">
    <text evidence="1">Isoprenoid biosynthesis; isopentenyl diphosphate biosynthesis via DXP pathway; isopentenyl diphosphate from 1-deoxy-D-xylulose 5-phosphate: step 6/6.</text>
</comment>
<comment type="subunit">
    <text evidence="1">Homodimer.</text>
</comment>
<comment type="similarity">
    <text evidence="1">Belongs to the IspH family.</text>
</comment>
<evidence type="ECO:0000255" key="1">
    <source>
        <dbReference type="HAMAP-Rule" id="MF_00191"/>
    </source>
</evidence>
<gene>
    <name evidence="1" type="primary">ispH</name>
    <name type="ordered locus">ECIAI1_0030</name>
</gene>